<feature type="chain" id="PRO_1000018906" description="Bifunctional purine biosynthesis protein PurH">
    <location>
        <begin position="1"/>
        <end position="508"/>
    </location>
</feature>
<feature type="domain" description="MGS-like" evidence="2">
    <location>
        <begin position="1"/>
        <end position="144"/>
    </location>
</feature>
<reference key="1">
    <citation type="journal article" date="2006" name="Proc. Natl. Acad. Sci. U.S.A.">
        <title>Comparative genomics of the lactic acid bacteria.</title>
        <authorList>
            <person name="Makarova K.S."/>
            <person name="Slesarev A."/>
            <person name="Wolf Y.I."/>
            <person name="Sorokin A."/>
            <person name="Mirkin B."/>
            <person name="Koonin E.V."/>
            <person name="Pavlov A."/>
            <person name="Pavlova N."/>
            <person name="Karamychev V."/>
            <person name="Polouchine N."/>
            <person name="Shakhova V."/>
            <person name="Grigoriev I."/>
            <person name="Lou Y."/>
            <person name="Rohksar D."/>
            <person name="Lucas S."/>
            <person name="Huang K."/>
            <person name="Goodstein D.M."/>
            <person name="Hawkins T."/>
            <person name="Plengvidhya V."/>
            <person name="Welker D."/>
            <person name="Hughes J."/>
            <person name="Goh Y."/>
            <person name="Benson A."/>
            <person name="Baldwin K."/>
            <person name="Lee J.-H."/>
            <person name="Diaz-Muniz I."/>
            <person name="Dosti B."/>
            <person name="Smeianov V."/>
            <person name="Wechter W."/>
            <person name="Barabote R."/>
            <person name="Lorca G."/>
            <person name="Altermann E."/>
            <person name="Barrangou R."/>
            <person name="Ganesan B."/>
            <person name="Xie Y."/>
            <person name="Rawsthorne H."/>
            <person name="Tamir D."/>
            <person name="Parker C."/>
            <person name="Breidt F."/>
            <person name="Broadbent J.R."/>
            <person name="Hutkins R."/>
            <person name="O'Sullivan D."/>
            <person name="Steele J."/>
            <person name="Unlu G."/>
            <person name="Saier M.H. Jr."/>
            <person name="Klaenhammer T."/>
            <person name="Richardson P."/>
            <person name="Kozyavkin S."/>
            <person name="Weimer B.C."/>
            <person name="Mills D.A."/>
        </authorList>
    </citation>
    <scope>NUCLEOTIDE SEQUENCE [LARGE SCALE GENOMIC DNA]</scope>
    <source>
        <strain>ATCC 8293 / DSM 20343 / BCRC 11652 / CCM 1803 / JCM 6124 / NCDO 523 / NBRC 100496 / NCIMB 8023 / NCTC 12954 / NRRL B-1118 / 37Y</strain>
    </source>
</reference>
<proteinExistence type="inferred from homology"/>
<sequence length="508" mass="55403">MTRALLSVSDKSGLIPFAKNLVELGYELVSTGGTHKVLIDAGLDVISIDEVTDFPEMLDGRVKTLHPRVHAGLLARRDLPEHMAKLAEFDITPIDMVVVNLYPFKSTIQKEGVTEAEAIENIDIGGPSMLRSAAKNFASVLPIVDPKDYDVVVNKLKAGEVDREYRKSLAAKVFQHTASYDALIANYLTETSFPENLTLAYEKFDDMRYGENPHQPAAAYKTALPEAYSVLNADILHGKQLSYNNIRDADAALRIIAEYEETTVVTVKHMNPAGIGQGQTLEAAWDQAFAADDISIFGGIVALNREVDAATAEKMHDIFLEIIIAPSFTPEAYEILAAKKNLRLLTLPFTTSIPQKLEVTSVLGGVVVQERDLVGESENNFTVVSKAQPTKEQLQAMVFAQKVVKHVKSNAIVVARNGQTLGIGAGQPNRIDSVVYSIQKAEKKPGFDEAVLASDAFFPMDDSVQYAAEHGIKAIVEPGGSIKDKDSIAKADELGVVLIFSGTRHFKH</sequence>
<name>PUR9_LEUMM</name>
<accession>Q03Y85</accession>
<keyword id="KW-0378">Hydrolase</keyword>
<keyword id="KW-0511">Multifunctional enzyme</keyword>
<keyword id="KW-0658">Purine biosynthesis</keyword>
<keyword id="KW-1185">Reference proteome</keyword>
<keyword id="KW-0808">Transferase</keyword>
<gene>
    <name evidence="1" type="primary">purH</name>
    <name type="ordered locus">LEUM_0727</name>
</gene>
<comment type="catalytic activity">
    <reaction evidence="1">
        <text>(6R)-10-formyltetrahydrofolate + 5-amino-1-(5-phospho-beta-D-ribosyl)imidazole-4-carboxamide = 5-formamido-1-(5-phospho-D-ribosyl)imidazole-4-carboxamide + (6S)-5,6,7,8-tetrahydrofolate</text>
        <dbReference type="Rhea" id="RHEA:22192"/>
        <dbReference type="ChEBI" id="CHEBI:57453"/>
        <dbReference type="ChEBI" id="CHEBI:58467"/>
        <dbReference type="ChEBI" id="CHEBI:58475"/>
        <dbReference type="ChEBI" id="CHEBI:195366"/>
        <dbReference type="EC" id="2.1.2.3"/>
    </reaction>
</comment>
<comment type="catalytic activity">
    <reaction evidence="1">
        <text>IMP + H2O = 5-formamido-1-(5-phospho-D-ribosyl)imidazole-4-carboxamide</text>
        <dbReference type="Rhea" id="RHEA:18445"/>
        <dbReference type="ChEBI" id="CHEBI:15377"/>
        <dbReference type="ChEBI" id="CHEBI:58053"/>
        <dbReference type="ChEBI" id="CHEBI:58467"/>
        <dbReference type="EC" id="3.5.4.10"/>
    </reaction>
</comment>
<comment type="pathway">
    <text evidence="1">Purine metabolism; IMP biosynthesis via de novo pathway; 5-formamido-1-(5-phospho-D-ribosyl)imidazole-4-carboxamide from 5-amino-1-(5-phospho-D-ribosyl)imidazole-4-carboxamide (10-formyl THF route): step 1/1.</text>
</comment>
<comment type="pathway">
    <text evidence="1">Purine metabolism; IMP biosynthesis via de novo pathway; IMP from 5-formamido-1-(5-phospho-D-ribosyl)imidazole-4-carboxamide: step 1/1.</text>
</comment>
<comment type="domain">
    <text evidence="1">The IMP cyclohydrolase activity resides in the N-terminal region.</text>
</comment>
<comment type="similarity">
    <text evidence="1">Belongs to the PurH family.</text>
</comment>
<evidence type="ECO:0000255" key="1">
    <source>
        <dbReference type="HAMAP-Rule" id="MF_00139"/>
    </source>
</evidence>
<evidence type="ECO:0000255" key="2">
    <source>
        <dbReference type="PROSITE-ProRule" id="PRU01202"/>
    </source>
</evidence>
<protein>
    <recommendedName>
        <fullName evidence="1">Bifunctional purine biosynthesis protein PurH</fullName>
    </recommendedName>
    <domain>
        <recommendedName>
            <fullName evidence="1">Phosphoribosylaminoimidazolecarboxamide formyltransferase</fullName>
            <ecNumber evidence="1">2.1.2.3</ecNumber>
        </recommendedName>
        <alternativeName>
            <fullName evidence="1">AICAR transformylase</fullName>
        </alternativeName>
    </domain>
    <domain>
        <recommendedName>
            <fullName evidence="1">IMP cyclohydrolase</fullName>
            <ecNumber evidence="1">3.5.4.10</ecNumber>
        </recommendedName>
        <alternativeName>
            <fullName evidence="1">ATIC</fullName>
        </alternativeName>
        <alternativeName>
            <fullName evidence="1">IMP synthase</fullName>
        </alternativeName>
        <alternativeName>
            <fullName evidence="1">Inosinicase</fullName>
        </alternativeName>
    </domain>
</protein>
<dbReference type="EC" id="2.1.2.3" evidence="1"/>
<dbReference type="EC" id="3.5.4.10" evidence="1"/>
<dbReference type="EMBL" id="CP000414">
    <property type="protein sequence ID" value="ABJ61837.1"/>
    <property type="molecule type" value="Genomic_DNA"/>
</dbReference>
<dbReference type="RefSeq" id="WP_011679517.1">
    <property type="nucleotide sequence ID" value="NC_008531.1"/>
</dbReference>
<dbReference type="SMR" id="Q03Y85"/>
<dbReference type="EnsemblBacteria" id="ABJ61837">
    <property type="protein sequence ID" value="ABJ61837"/>
    <property type="gene ID" value="LEUM_0727"/>
</dbReference>
<dbReference type="GeneID" id="29577410"/>
<dbReference type="KEGG" id="lme:LEUM_0727"/>
<dbReference type="eggNOG" id="COG0138">
    <property type="taxonomic scope" value="Bacteria"/>
</dbReference>
<dbReference type="HOGENOM" id="CLU_016316_5_2_9"/>
<dbReference type="UniPathway" id="UPA00074">
    <property type="reaction ID" value="UER00133"/>
</dbReference>
<dbReference type="UniPathway" id="UPA00074">
    <property type="reaction ID" value="UER00135"/>
</dbReference>
<dbReference type="Proteomes" id="UP000000362">
    <property type="component" value="Chromosome"/>
</dbReference>
<dbReference type="GO" id="GO:0005829">
    <property type="term" value="C:cytosol"/>
    <property type="evidence" value="ECO:0007669"/>
    <property type="project" value="TreeGrafter"/>
</dbReference>
<dbReference type="GO" id="GO:0003937">
    <property type="term" value="F:IMP cyclohydrolase activity"/>
    <property type="evidence" value="ECO:0007669"/>
    <property type="project" value="UniProtKB-UniRule"/>
</dbReference>
<dbReference type="GO" id="GO:0004643">
    <property type="term" value="F:phosphoribosylaminoimidazolecarboxamide formyltransferase activity"/>
    <property type="evidence" value="ECO:0007669"/>
    <property type="project" value="UniProtKB-UniRule"/>
</dbReference>
<dbReference type="GO" id="GO:0006189">
    <property type="term" value="P:'de novo' IMP biosynthetic process"/>
    <property type="evidence" value="ECO:0007669"/>
    <property type="project" value="UniProtKB-UniRule"/>
</dbReference>
<dbReference type="CDD" id="cd01421">
    <property type="entry name" value="IMPCH"/>
    <property type="match status" value="1"/>
</dbReference>
<dbReference type="FunFam" id="3.40.140.20:FF:000001">
    <property type="entry name" value="Bifunctional purine biosynthesis protein PurH"/>
    <property type="match status" value="1"/>
</dbReference>
<dbReference type="FunFam" id="3.40.140.20:FF:000002">
    <property type="entry name" value="Bifunctional purine biosynthesis protein PurH"/>
    <property type="match status" value="1"/>
</dbReference>
<dbReference type="FunFam" id="3.40.50.1380:FF:000001">
    <property type="entry name" value="Bifunctional purine biosynthesis protein PurH"/>
    <property type="match status" value="1"/>
</dbReference>
<dbReference type="Gene3D" id="3.40.140.20">
    <property type="match status" value="2"/>
</dbReference>
<dbReference type="Gene3D" id="3.40.50.1380">
    <property type="entry name" value="Methylglyoxal synthase-like domain"/>
    <property type="match status" value="1"/>
</dbReference>
<dbReference type="HAMAP" id="MF_00139">
    <property type="entry name" value="PurH"/>
    <property type="match status" value="1"/>
</dbReference>
<dbReference type="InterPro" id="IPR024051">
    <property type="entry name" value="AICAR_Tfase_dup_dom_sf"/>
</dbReference>
<dbReference type="InterPro" id="IPR016193">
    <property type="entry name" value="Cytidine_deaminase-like"/>
</dbReference>
<dbReference type="InterPro" id="IPR011607">
    <property type="entry name" value="MGS-like_dom"/>
</dbReference>
<dbReference type="InterPro" id="IPR036914">
    <property type="entry name" value="MGS-like_dom_sf"/>
</dbReference>
<dbReference type="InterPro" id="IPR002695">
    <property type="entry name" value="PurH-like"/>
</dbReference>
<dbReference type="NCBIfam" id="NF002049">
    <property type="entry name" value="PRK00881.1"/>
    <property type="match status" value="1"/>
</dbReference>
<dbReference type="NCBIfam" id="TIGR00355">
    <property type="entry name" value="purH"/>
    <property type="match status" value="1"/>
</dbReference>
<dbReference type="PANTHER" id="PTHR11692:SF0">
    <property type="entry name" value="BIFUNCTIONAL PURINE BIOSYNTHESIS PROTEIN ATIC"/>
    <property type="match status" value="1"/>
</dbReference>
<dbReference type="PANTHER" id="PTHR11692">
    <property type="entry name" value="BIFUNCTIONAL PURINE BIOSYNTHESIS PROTEIN PURH"/>
    <property type="match status" value="1"/>
</dbReference>
<dbReference type="Pfam" id="PF01808">
    <property type="entry name" value="AICARFT_IMPCHas"/>
    <property type="match status" value="1"/>
</dbReference>
<dbReference type="Pfam" id="PF02142">
    <property type="entry name" value="MGS"/>
    <property type="match status" value="1"/>
</dbReference>
<dbReference type="PIRSF" id="PIRSF000414">
    <property type="entry name" value="AICARFT_IMPCHas"/>
    <property type="match status" value="1"/>
</dbReference>
<dbReference type="SMART" id="SM00798">
    <property type="entry name" value="AICARFT_IMPCHas"/>
    <property type="match status" value="1"/>
</dbReference>
<dbReference type="SMART" id="SM00851">
    <property type="entry name" value="MGS"/>
    <property type="match status" value="1"/>
</dbReference>
<dbReference type="SUPFAM" id="SSF53927">
    <property type="entry name" value="Cytidine deaminase-like"/>
    <property type="match status" value="1"/>
</dbReference>
<dbReference type="SUPFAM" id="SSF52335">
    <property type="entry name" value="Methylglyoxal synthase-like"/>
    <property type="match status" value="1"/>
</dbReference>
<dbReference type="PROSITE" id="PS51855">
    <property type="entry name" value="MGS"/>
    <property type="match status" value="1"/>
</dbReference>
<organism>
    <name type="scientific">Leuconostoc mesenteroides subsp. mesenteroides (strain ATCC 8293 / DSM 20343 / BCRC 11652 / CCM 1803 / JCM 6124 / NCDO 523 / NBRC 100496 / NCIMB 8023 / NCTC 12954 / NRRL B-1118 / 37Y)</name>
    <dbReference type="NCBI Taxonomy" id="203120"/>
    <lineage>
        <taxon>Bacteria</taxon>
        <taxon>Bacillati</taxon>
        <taxon>Bacillota</taxon>
        <taxon>Bacilli</taxon>
        <taxon>Lactobacillales</taxon>
        <taxon>Lactobacillaceae</taxon>
        <taxon>Leuconostoc</taxon>
    </lineage>
</organism>